<keyword id="KW-0903">Direct protein sequencing</keyword>
<keyword id="KW-0276">Fatty acid metabolism</keyword>
<keyword id="KW-0413">Isomerase</keyword>
<keyword id="KW-0443">Lipid metabolism</keyword>
<keyword id="KW-0456">Lyase</keyword>
<keyword id="KW-0511">Multifunctional enzyme</keyword>
<keyword id="KW-0521">NADP</keyword>
<keyword id="KW-0560">Oxidoreductase</keyword>
<keyword id="KW-0576">Peroxisome</keyword>
<keyword id="KW-1185">Reference proteome</keyword>
<keyword id="KW-0677">Repeat</keyword>
<accession>Q01373</accession>
<accession>Q7S8Y7</accession>
<sequence>MAEQLRFDGQVVVVTGAGGGLGKAYCLFFGSRGASVVVNDLGASFKGEGNSTKAADVVVNEIKAAGGKAVANYDSVENGDKIIETAIKEFGRIDILINNAGILRDISFKNMKDEDWDLIFKVHVKGSYKTARAAWPYFRKQKFGRVINTASAAGLFGNFGQANYSAAKLGMVGFTETLAKEGLKYNIISNVIAPIAASRMTETVMPPDLLALMKPEWVVPLVAVLVHKNNTSETGSIFEVGGGHVAKLRWERSSGLLLKADESYTPGAIIKKWDQVTDFSNPQYPTGPNDFLALLEESLKLGPNDPGEKVDFKGRVALVTGGGAGIGRAYCLAFARAGASVVVNDLVNPDDVVNEIKKMGGKAVGAKFSAEDGDAVVKAAIDAFGRVDIVVNNAGILRDKAFHNMDDSLWDPVMNVHARGTYKVTKAAWPYFLKQKYGRVLNTTSTSGIYGNFGQANYSAAKCAILGFSRAIALEGAKYNIYVNTIAPNAGTAMTKTILPEELVQAFKPDYVAPLVLALCSDKVPKKPTGGLYEVGSGWCGQTRWQRSGGHGFPVDVPLTPEEVVKHWNDIVTFDSRADHPEKASDSIEKIMANMENRVGEGKSGAAENEHLAAIKKFTGVEGKGTEYTFTERDVCLYNLGIGAKRTDIKYIFEGNEDFEVVPTFGVIPPFNTEMPFSFDDIVPNFSPMMLLHGEQYLEVRKYPIPTSGRLVSKGKLLEVVDKGSAAIVKQGITTFNAETGEELFYNEMTVFLRGCGGFGGQKKPADRGASTAANKPPARSPDAVVEVQTTEEQAAIYRLSGDYNPLHVDPAFAKVGGFKVPILHGLCSFGIAGKAVYEKYGKFKNIKVRFAGTVNPGQTLVTEMWKEGNKVVFQTKVKETGKLAISGAAAELA</sequence>
<gene>
    <name type="primary">fox-2</name>
    <name type="ORF">NCU08828</name>
</gene>
<evidence type="ECO:0000250" key="1"/>
<evidence type="ECO:0000250" key="2">
    <source>
        <dbReference type="UniProtKB" id="L0E2Z4"/>
    </source>
</evidence>
<evidence type="ECO:0000250" key="3">
    <source>
        <dbReference type="UniProtKB" id="O93868"/>
    </source>
</evidence>
<evidence type="ECO:0000250" key="4">
    <source>
        <dbReference type="UniProtKB" id="P22414"/>
    </source>
</evidence>
<evidence type="ECO:0000255" key="5">
    <source>
        <dbReference type="PROSITE-ProRule" id="PRU10001"/>
    </source>
</evidence>
<evidence type="ECO:0000256" key="6">
    <source>
        <dbReference type="SAM" id="MobiDB-lite"/>
    </source>
</evidence>
<evidence type="ECO:0000305" key="7"/>
<name>FOX2_NEUCR</name>
<reference key="1">
    <citation type="journal article" date="1995" name="Mol. Gen. Genet.">
        <title>Molecular cloning, sequencing and sequence analysis of the fox-2 gene of Neurospora crassa encoding the multifunctional beta-oxidation protein.</title>
        <authorList>
            <person name="Fossa A."/>
            <person name="Beyer A."/>
            <person name="Pfitzner E."/>
            <person name="Wenzel B."/>
            <person name="Kunau W.-H."/>
        </authorList>
    </citation>
    <scope>NUCLEOTIDE SEQUENCE [MRNA]</scope>
    <scope>PROTEIN SEQUENCE OF 497-525 AND 604-619</scope>
    <source>
        <strain>74-OR8-1A / DSM 1258</strain>
    </source>
</reference>
<reference key="2">
    <citation type="journal article" date="2003" name="Nature">
        <title>The genome sequence of the filamentous fungus Neurospora crassa.</title>
        <authorList>
            <person name="Galagan J.E."/>
            <person name="Calvo S.E."/>
            <person name="Borkovich K.A."/>
            <person name="Selker E.U."/>
            <person name="Read N.D."/>
            <person name="Jaffe D.B."/>
            <person name="FitzHugh W."/>
            <person name="Ma L.-J."/>
            <person name="Smirnov S."/>
            <person name="Purcell S."/>
            <person name="Rehman B."/>
            <person name="Elkins T."/>
            <person name="Engels R."/>
            <person name="Wang S."/>
            <person name="Nielsen C.B."/>
            <person name="Butler J."/>
            <person name="Endrizzi M."/>
            <person name="Qui D."/>
            <person name="Ianakiev P."/>
            <person name="Bell-Pedersen D."/>
            <person name="Nelson M.A."/>
            <person name="Werner-Washburne M."/>
            <person name="Selitrennikoff C.P."/>
            <person name="Kinsey J.A."/>
            <person name="Braun E.L."/>
            <person name="Zelter A."/>
            <person name="Schulte U."/>
            <person name="Kothe G.O."/>
            <person name="Jedd G."/>
            <person name="Mewes H.-W."/>
            <person name="Staben C."/>
            <person name="Marcotte E."/>
            <person name="Greenberg D."/>
            <person name="Roy A."/>
            <person name="Foley K."/>
            <person name="Naylor J."/>
            <person name="Stange-Thomann N."/>
            <person name="Barrett R."/>
            <person name="Gnerre S."/>
            <person name="Kamal M."/>
            <person name="Kamvysselis M."/>
            <person name="Mauceli E.W."/>
            <person name="Bielke C."/>
            <person name="Rudd S."/>
            <person name="Frishman D."/>
            <person name="Krystofova S."/>
            <person name="Rasmussen C."/>
            <person name="Metzenberg R.L."/>
            <person name="Perkins D.D."/>
            <person name="Kroken S."/>
            <person name="Cogoni C."/>
            <person name="Macino G."/>
            <person name="Catcheside D.E.A."/>
            <person name="Li W."/>
            <person name="Pratt R.J."/>
            <person name="Osmani S.A."/>
            <person name="DeSouza C.P.C."/>
            <person name="Glass N.L."/>
            <person name="Orbach M.J."/>
            <person name="Berglund J.A."/>
            <person name="Voelker R."/>
            <person name="Yarden O."/>
            <person name="Plamann M."/>
            <person name="Seiler S."/>
            <person name="Dunlap J.C."/>
            <person name="Radford A."/>
            <person name="Aramayo R."/>
            <person name="Natvig D.O."/>
            <person name="Alex L.A."/>
            <person name="Mannhaupt G."/>
            <person name="Ebbole D.J."/>
            <person name="Freitag M."/>
            <person name="Paulsen I."/>
            <person name="Sachs M.S."/>
            <person name="Lander E.S."/>
            <person name="Nusbaum C."/>
            <person name="Birren B.W."/>
        </authorList>
    </citation>
    <scope>NUCLEOTIDE SEQUENCE [LARGE SCALE GENOMIC DNA]</scope>
    <source>
        <strain>ATCC 24698 / 74-OR23-1A / CBS 708.71 / DSM 1257 / FGSC 987</strain>
    </source>
</reference>
<reference key="3">
    <citation type="journal article" date="1991" name="J. Biol. Chem.">
        <title>Beta-oxidation system of the filamentous fungus Neurospora crassa. Structural characterization of the trifunctional protein.</title>
        <authorList>
            <person name="Thieringer R."/>
            <person name="Kunau W.-H."/>
        </authorList>
    </citation>
    <scope>PROTEIN SEQUENCE OF 487-528</scope>
</reference>
<organism>
    <name type="scientific">Neurospora crassa (strain ATCC 24698 / 74-OR23-1A / CBS 708.71 / DSM 1257 / FGSC 987)</name>
    <dbReference type="NCBI Taxonomy" id="367110"/>
    <lineage>
        <taxon>Eukaryota</taxon>
        <taxon>Fungi</taxon>
        <taxon>Dikarya</taxon>
        <taxon>Ascomycota</taxon>
        <taxon>Pezizomycotina</taxon>
        <taxon>Sordariomycetes</taxon>
        <taxon>Sordariomycetidae</taxon>
        <taxon>Sordariales</taxon>
        <taxon>Sordariaceae</taxon>
        <taxon>Neurospora</taxon>
    </lineage>
</organism>
<protein>
    <recommendedName>
        <fullName>Peroxisomal hydratase-dehydrogenase-epimerase</fullName>
        <shortName>HDE</shortName>
    </recommendedName>
    <alternativeName>
        <fullName>Multifunctional beta-oxidation protein</fullName>
        <shortName>MFP</shortName>
    </alternativeName>
    <domain>
        <recommendedName>
            <fullName>2-enoyl-CoA hydratase</fullName>
            <ecNumber>4.2.1.119</ecNumber>
        </recommendedName>
    </domain>
    <domain>
        <recommendedName>
            <fullName>(3R)-3-hydroxyacyl-CoA dehydrogenase</fullName>
            <ecNumber>1.1.1.n12</ecNumber>
        </recommendedName>
    </domain>
</protein>
<feature type="chain" id="PRO_0000054699" description="Peroxisomal hydratase-dehydrogenase-epimerase">
    <location>
        <begin position="1"/>
        <end position="894"/>
    </location>
</feature>
<feature type="domain" description="MaoC-like">
    <location>
        <begin position="776"/>
        <end position="887"/>
    </location>
</feature>
<feature type="region of interest" description="Short-chain dehydrogenase like 1">
    <location>
        <begin position="6"/>
        <end position="230"/>
    </location>
</feature>
<feature type="region of interest" description="Short-chain dehydrogenase like 2">
    <location>
        <begin position="311"/>
        <end position="523"/>
    </location>
</feature>
<feature type="region of interest" description="Disordered" evidence="6">
    <location>
        <begin position="763"/>
        <end position="782"/>
    </location>
</feature>
<feature type="active site" description="Proton acceptor" evidence="5">
    <location>
        <position position="164"/>
    </location>
</feature>
<feature type="active site" description="Lowers pKa of active site Tyr" evidence="3">
    <location>
        <position position="168"/>
    </location>
</feature>
<feature type="active site" description="Proton acceptor" evidence="5">
    <location>
        <position position="458"/>
    </location>
</feature>
<feature type="binding site" evidence="2">
    <location>
        <position position="14"/>
    </location>
    <ligand>
        <name>NADP(+)</name>
        <dbReference type="ChEBI" id="CHEBI:58349"/>
    </ligand>
</feature>
<feature type="binding site" evidence="2">
    <location>
        <position position="53"/>
    </location>
    <ligand>
        <name>NADP(+)</name>
        <dbReference type="ChEBI" id="CHEBI:58349"/>
    </ligand>
</feature>
<feature type="binding site" evidence="3">
    <location>
        <position position="99"/>
    </location>
    <ligand>
        <name>NADP(+)</name>
        <dbReference type="ChEBI" id="CHEBI:58349"/>
    </ligand>
</feature>
<feature type="binding site" evidence="2">
    <location>
        <position position="132"/>
    </location>
    <ligand>
        <name>NADP(+)</name>
        <dbReference type="ChEBI" id="CHEBI:58349"/>
    </ligand>
</feature>
<feature type="binding site" evidence="3">
    <location>
        <position position="164"/>
    </location>
    <ligand>
        <name>NADP(+)</name>
        <dbReference type="ChEBI" id="CHEBI:58349"/>
    </ligand>
</feature>
<feature type="binding site" evidence="3">
    <location>
        <position position="168"/>
    </location>
    <ligand>
        <name>NADP(+)</name>
        <dbReference type="ChEBI" id="CHEBI:58349"/>
    </ligand>
</feature>
<feature type="binding site" evidence="3">
    <location>
        <position position="197"/>
    </location>
    <ligand>
        <name>NADP(+)</name>
        <dbReference type="ChEBI" id="CHEBI:58349"/>
    </ligand>
</feature>
<feature type="binding site" evidence="4">
    <location>
        <position position="693"/>
    </location>
    <ligand>
        <name>(3R)-3-hydroxydecanoyl-CoA</name>
        <dbReference type="ChEBI" id="CHEBI:74272"/>
    </ligand>
</feature>
<feature type="binding site" evidence="4">
    <location>
        <position position="694"/>
    </location>
    <ligand>
        <name>(3R)-3-hydroxydecanoyl-CoA</name>
        <dbReference type="ChEBI" id="CHEBI:74272"/>
    </ligand>
</feature>
<feature type="binding site" evidence="4">
    <location>
        <position position="723"/>
    </location>
    <ligand>
        <name>(3R)-3-hydroxydecanoyl-CoA</name>
        <dbReference type="ChEBI" id="CHEBI:74272"/>
    </ligand>
</feature>
<feature type="binding site" evidence="4">
    <location>
        <position position="803"/>
    </location>
    <ligand>
        <name>(3R)-3-hydroxydecanoyl-CoA</name>
        <dbReference type="ChEBI" id="CHEBI:74272"/>
    </ligand>
</feature>
<feature type="binding site" evidence="4">
    <location>
        <position position="805"/>
    </location>
    <ligand>
        <name>(3R)-3-hydroxydecanoyl-CoA</name>
        <dbReference type="ChEBI" id="CHEBI:74272"/>
    </ligand>
</feature>
<feature type="binding site" evidence="4">
    <location>
        <position position="826"/>
    </location>
    <ligand>
        <name>(3R)-3-hydroxydecanoyl-CoA</name>
        <dbReference type="ChEBI" id="CHEBI:74272"/>
    </ligand>
</feature>
<feature type="binding site" evidence="4">
    <location>
        <position position="851"/>
    </location>
    <ligand>
        <name>(3R)-3-hydroxydecanoyl-CoA</name>
        <dbReference type="ChEBI" id="CHEBI:74272"/>
    </ligand>
</feature>
<feature type="binding site" evidence="4">
    <location>
        <position position="853"/>
    </location>
    <ligand>
        <name>(3R)-3-hydroxydecanoyl-CoA</name>
        <dbReference type="ChEBI" id="CHEBI:74272"/>
    </ligand>
</feature>
<comment type="function">
    <text>Second trifunctional enzyme acting on the beta-oxidation pathway for fatty acids, possessing hydratase-dehydrogenase-epimerase activities. Converts trans-2-enoyl-CoA via D-3-hydroxyacyl-CoA to 3-ketoacyl-CoA.</text>
</comment>
<comment type="catalytic activity">
    <reaction>
        <text>a (3R)-3-hydroxyacyl-CoA = a (2E)-enoyl-CoA + H2O</text>
        <dbReference type="Rhea" id="RHEA:26526"/>
        <dbReference type="ChEBI" id="CHEBI:15377"/>
        <dbReference type="ChEBI" id="CHEBI:57319"/>
        <dbReference type="ChEBI" id="CHEBI:58856"/>
        <dbReference type="EC" id="4.2.1.119"/>
    </reaction>
</comment>
<comment type="catalytic activity">
    <reaction>
        <text>a (3R)-3-hydroxyacyl-CoA + NAD(+) = a 3-oxoacyl-CoA + NADH + H(+)</text>
        <dbReference type="Rhea" id="RHEA:32711"/>
        <dbReference type="ChEBI" id="CHEBI:15378"/>
        <dbReference type="ChEBI" id="CHEBI:57319"/>
        <dbReference type="ChEBI" id="CHEBI:57540"/>
        <dbReference type="ChEBI" id="CHEBI:57945"/>
        <dbReference type="ChEBI" id="CHEBI:90726"/>
        <dbReference type="EC" id="1.1.1.n12"/>
    </reaction>
</comment>
<comment type="pathway">
    <text>Lipid metabolism; fatty acid beta-oxidation.</text>
</comment>
<comment type="subunit">
    <text evidence="1">Monomer.</text>
</comment>
<comment type="subcellular location">
    <subcellularLocation>
        <location evidence="7">Peroxisome</location>
    </subcellularLocation>
    <text>Catalase-free microbodies.</text>
</comment>
<comment type="domain">
    <text>Contains two SDR domains.</text>
</comment>
<comment type="similarity">
    <text evidence="7">Belongs to the short-chain dehydrogenases/reductases (SDR) family.</text>
</comment>
<dbReference type="EC" id="4.2.1.119"/>
<dbReference type="EC" id="1.1.1.n12"/>
<dbReference type="EMBL" id="X80052">
    <property type="protein sequence ID" value="CAA56355.1"/>
    <property type="molecule type" value="mRNA"/>
</dbReference>
<dbReference type="EMBL" id="CM002239">
    <property type="protein sequence ID" value="EAA32803.1"/>
    <property type="molecule type" value="Genomic_DNA"/>
</dbReference>
<dbReference type="PIR" id="S54786">
    <property type="entry name" value="S54786"/>
</dbReference>
<dbReference type="RefSeq" id="XP_962039.1">
    <property type="nucleotide sequence ID" value="XM_956946.2"/>
</dbReference>
<dbReference type="SMR" id="Q01373"/>
<dbReference type="FunCoup" id="Q01373">
    <property type="interactions" value="244"/>
</dbReference>
<dbReference type="STRING" id="367110.Q01373"/>
<dbReference type="PaxDb" id="5141-EFNCRP00000008724"/>
<dbReference type="EnsemblFungi" id="EAA32803">
    <property type="protein sequence ID" value="EAA32803"/>
    <property type="gene ID" value="NCU08828"/>
</dbReference>
<dbReference type="GeneID" id="3878199"/>
<dbReference type="KEGG" id="ncr:NCU08828"/>
<dbReference type="VEuPathDB" id="FungiDB:NCU08828"/>
<dbReference type="HOGENOM" id="CLU_010194_18_1_1"/>
<dbReference type="InParanoid" id="Q01373"/>
<dbReference type="OMA" id="GKTRWQR"/>
<dbReference type="OrthoDB" id="3592703at2759"/>
<dbReference type="UniPathway" id="UPA00659"/>
<dbReference type="Proteomes" id="UP000001805">
    <property type="component" value="Chromosome 4, Linkage Group IV"/>
</dbReference>
<dbReference type="GO" id="GO:0005777">
    <property type="term" value="C:peroxisome"/>
    <property type="evidence" value="ECO:0000318"/>
    <property type="project" value="GO_Central"/>
</dbReference>
<dbReference type="GO" id="GO:0106386">
    <property type="term" value="F:(3R)-hydroxyacyl-CoA dehydrogenase (NAD+) activity"/>
    <property type="evidence" value="ECO:0007669"/>
    <property type="project" value="RHEA"/>
</dbReference>
<dbReference type="GO" id="GO:0044594">
    <property type="term" value="F:17-beta-hydroxysteroid dehydrogenase (NAD+) activity"/>
    <property type="evidence" value="ECO:0000318"/>
    <property type="project" value="GO_Central"/>
</dbReference>
<dbReference type="GO" id="GO:0003857">
    <property type="term" value="F:3-hydroxyacyl-CoA dehydrogenase activity"/>
    <property type="evidence" value="ECO:0000318"/>
    <property type="project" value="GO_Central"/>
</dbReference>
<dbReference type="GO" id="GO:0004300">
    <property type="term" value="F:enoyl-CoA hydratase activity"/>
    <property type="evidence" value="ECO:0000318"/>
    <property type="project" value="GO_Central"/>
</dbReference>
<dbReference type="GO" id="GO:0016853">
    <property type="term" value="F:isomerase activity"/>
    <property type="evidence" value="ECO:0007669"/>
    <property type="project" value="UniProtKB-KW"/>
</dbReference>
<dbReference type="GO" id="GO:0006635">
    <property type="term" value="P:fatty acid beta-oxidation"/>
    <property type="evidence" value="ECO:0000318"/>
    <property type="project" value="GO_Central"/>
</dbReference>
<dbReference type="CDD" id="cd03448">
    <property type="entry name" value="HDE_HSD"/>
    <property type="match status" value="1"/>
</dbReference>
<dbReference type="CDD" id="cd05353">
    <property type="entry name" value="hydroxyacyl-CoA-like_DH_SDR_c-like"/>
    <property type="match status" value="2"/>
</dbReference>
<dbReference type="FunFam" id="3.40.50.720:FF:000410">
    <property type="entry name" value="Peroxisomal multifunctional beta-oxidation protein"/>
    <property type="match status" value="1"/>
</dbReference>
<dbReference type="FunFam" id="3.10.129.10:FF:000013">
    <property type="entry name" value="Peroxisomal multifunctional enzyme type 2"/>
    <property type="match status" value="1"/>
</dbReference>
<dbReference type="FunFam" id="3.40.50.720:FF:000185">
    <property type="entry name" value="peroxisomal multifunctional enzyme type 2"/>
    <property type="match status" value="1"/>
</dbReference>
<dbReference type="Gene3D" id="3.10.129.10">
    <property type="entry name" value="Hotdog Thioesterase"/>
    <property type="match status" value="1"/>
</dbReference>
<dbReference type="Gene3D" id="3.40.50.720">
    <property type="entry name" value="NAD(P)-binding Rossmann-like Domain"/>
    <property type="match status" value="2"/>
</dbReference>
<dbReference type="InterPro" id="IPR029069">
    <property type="entry name" value="HotDog_dom_sf"/>
</dbReference>
<dbReference type="InterPro" id="IPR002539">
    <property type="entry name" value="MaoC-like_dom"/>
</dbReference>
<dbReference type="InterPro" id="IPR054357">
    <property type="entry name" value="MFE-2_N"/>
</dbReference>
<dbReference type="InterPro" id="IPR036291">
    <property type="entry name" value="NAD(P)-bd_dom_sf"/>
</dbReference>
<dbReference type="InterPro" id="IPR051687">
    <property type="entry name" value="Peroxisomal_Beta-Oxidation"/>
</dbReference>
<dbReference type="InterPro" id="IPR020904">
    <property type="entry name" value="Sc_DH/Rdtase_CS"/>
</dbReference>
<dbReference type="InterPro" id="IPR002347">
    <property type="entry name" value="SDR_fam"/>
</dbReference>
<dbReference type="PANTHER" id="PTHR45024">
    <property type="entry name" value="DEHYDROGENASES, SHORT CHAIN"/>
    <property type="match status" value="1"/>
</dbReference>
<dbReference type="PANTHER" id="PTHR45024:SF2">
    <property type="entry name" value="SCP2 DOMAIN-CONTAINING PROTEIN"/>
    <property type="match status" value="1"/>
</dbReference>
<dbReference type="Pfam" id="PF00106">
    <property type="entry name" value="adh_short"/>
    <property type="match status" value="2"/>
</dbReference>
<dbReference type="Pfam" id="PF01575">
    <property type="entry name" value="MaoC_dehydratas"/>
    <property type="match status" value="1"/>
</dbReference>
<dbReference type="Pfam" id="PF22622">
    <property type="entry name" value="MFE-2_hydrat-2_N"/>
    <property type="match status" value="1"/>
</dbReference>
<dbReference type="PRINTS" id="PR00081">
    <property type="entry name" value="GDHRDH"/>
</dbReference>
<dbReference type="PRINTS" id="PR00080">
    <property type="entry name" value="SDRFAMILY"/>
</dbReference>
<dbReference type="SMART" id="SM00822">
    <property type="entry name" value="PKS_KR"/>
    <property type="match status" value="1"/>
</dbReference>
<dbReference type="SUPFAM" id="SSF51735">
    <property type="entry name" value="NAD(P)-binding Rossmann-fold domains"/>
    <property type="match status" value="2"/>
</dbReference>
<dbReference type="SUPFAM" id="SSF54637">
    <property type="entry name" value="Thioesterase/thiol ester dehydrase-isomerase"/>
    <property type="match status" value="2"/>
</dbReference>
<dbReference type="PROSITE" id="PS00061">
    <property type="entry name" value="ADH_SHORT"/>
    <property type="match status" value="1"/>
</dbReference>
<proteinExistence type="evidence at protein level"/>